<feature type="chain" id="PRO_1000052983" description="Large ribosomal subunit protein uL18">
    <location>
        <begin position="1"/>
        <end position="116"/>
    </location>
</feature>
<evidence type="ECO:0000255" key="1">
    <source>
        <dbReference type="HAMAP-Rule" id="MF_01337"/>
    </source>
</evidence>
<evidence type="ECO:0000305" key="2"/>
<organism>
    <name type="scientific">Alcanivorax borkumensis (strain ATCC 700651 / DSM 11573 / NCIMB 13689 / SK2)</name>
    <dbReference type="NCBI Taxonomy" id="393595"/>
    <lineage>
        <taxon>Bacteria</taxon>
        <taxon>Pseudomonadati</taxon>
        <taxon>Pseudomonadota</taxon>
        <taxon>Gammaproteobacteria</taxon>
        <taxon>Oceanospirillales</taxon>
        <taxon>Alcanivoracaceae</taxon>
        <taxon>Alcanivorax</taxon>
    </lineage>
</organism>
<protein>
    <recommendedName>
        <fullName evidence="1">Large ribosomal subunit protein uL18</fullName>
    </recommendedName>
    <alternativeName>
        <fullName evidence="2">50S ribosomal protein L18</fullName>
    </alternativeName>
</protein>
<proteinExistence type="inferred from homology"/>
<gene>
    <name evidence="1" type="primary">rplR</name>
    <name type="ordered locus">ABO_0413</name>
</gene>
<sequence>MKDKKVARLRRAKRTRLKIRELGEVRLCVHRTPRHIYAQVISAAGDQVLASASTVEKDLRADATGNADAATKVGQIIAQRAKEAGIERVAFDRSGFKYHGRVKALADAARENGLEF</sequence>
<comment type="function">
    <text evidence="1">This is one of the proteins that bind and probably mediate the attachment of the 5S RNA into the large ribosomal subunit, where it forms part of the central protuberance.</text>
</comment>
<comment type="subunit">
    <text evidence="1">Part of the 50S ribosomal subunit; part of the 5S rRNA/L5/L18/L25 subcomplex. Contacts the 5S and 23S rRNAs.</text>
</comment>
<comment type="similarity">
    <text evidence="1">Belongs to the universal ribosomal protein uL18 family.</text>
</comment>
<dbReference type="EMBL" id="AM286690">
    <property type="protein sequence ID" value="CAL15861.1"/>
    <property type="molecule type" value="Genomic_DNA"/>
</dbReference>
<dbReference type="RefSeq" id="WP_011587701.1">
    <property type="nucleotide sequence ID" value="NC_008260.1"/>
</dbReference>
<dbReference type="SMR" id="Q0VSI7"/>
<dbReference type="STRING" id="393595.ABO_0413"/>
<dbReference type="KEGG" id="abo:ABO_0413"/>
<dbReference type="eggNOG" id="COG0256">
    <property type="taxonomic scope" value="Bacteria"/>
</dbReference>
<dbReference type="HOGENOM" id="CLU_098841_0_1_6"/>
<dbReference type="OrthoDB" id="9810939at2"/>
<dbReference type="Proteomes" id="UP000008871">
    <property type="component" value="Chromosome"/>
</dbReference>
<dbReference type="GO" id="GO:0022625">
    <property type="term" value="C:cytosolic large ribosomal subunit"/>
    <property type="evidence" value="ECO:0007669"/>
    <property type="project" value="TreeGrafter"/>
</dbReference>
<dbReference type="GO" id="GO:0008097">
    <property type="term" value="F:5S rRNA binding"/>
    <property type="evidence" value="ECO:0007669"/>
    <property type="project" value="TreeGrafter"/>
</dbReference>
<dbReference type="GO" id="GO:0003735">
    <property type="term" value="F:structural constituent of ribosome"/>
    <property type="evidence" value="ECO:0007669"/>
    <property type="project" value="InterPro"/>
</dbReference>
<dbReference type="GO" id="GO:0006412">
    <property type="term" value="P:translation"/>
    <property type="evidence" value="ECO:0007669"/>
    <property type="project" value="UniProtKB-UniRule"/>
</dbReference>
<dbReference type="CDD" id="cd00432">
    <property type="entry name" value="Ribosomal_L18_L5e"/>
    <property type="match status" value="1"/>
</dbReference>
<dbReference type="FunFam" id="3.30.420.100:FF:000001">
    <property type="entry name" value="50S ribosomal protein L18"/>
    <property type="match status" value="1"/>
</dbReference>
<dbReference type="Gene3D" id="3.30.420.100">
    <property type="match status" value="1"/>
</dbReference>
<dbReference type="HAMAP" id="MF_01337_B">
    <property type="entry name" value="Ribosomal_uL18_B"/>
    <property type="match status" value="1"/>
</dbReference>
<dbReference type="InterPro" id="IPR004389">
    <property type="entry name" value="Ribosomal_uL18_bac-type"/>
</dbReference>
<dbReference type="InterPro" id="IPR005484">
    <property type="entry name" value="Ribosomal_uL18_bac/euk"/>
</dbReference>
<dbReference type="NCBIfam" id="TIGR00060">
    <property type="entry name" value="L18_bact"/>
    <property type="match status" value="1"/>
</dbReference>
<dbReference type="PANTHER" id="PTHR12899">
    <property type="entry name" value="39S RIBOSOMAL PROTEIN L18, MITOCHONDRIAL"/>
    <property type="match status" value="1"/>
</dbReference>
<dbReference type="PANTHER" id="PTHR12899:SF3">
    <property type="entry name" value="LARGE RIBOSOMAL SUBUNIT PROTEIN UL18M"/>
    <property type="match status" value="1"/>
</dbReference>
<dbReference type="Pfam" id="PF00861">
    <property type="entry name" value="Ribosomal_L18p"/>
    <property type="match status" value="1"/>
</dbReference>
<dbReference type="SUPFAM" id="SSF53137">
    <property type="entry name" value="Translational machinery components"/>
    <property type="match status" value="1"/>
</dbReference>
<reference key="1">
    <citation type="journal article" date="2006" name="Nat. Biotechnol.">
        <title>Genome sequence of the ubiquitous hydrocarbon-degrading marine bacterium Alcanivorax borkumensis.</title>
        <authorList>
            <person name="Schneiker S."/>
            <person name="Martins dos Santos V.A.P."/>
            <person name="Bartels D."/>
            <person name="Bekel T."/>
            <person name="Brecht M."/>
            <person name="Buhrmester J."/>
            <person name="Chernikova T.N."/>
            <person name="Denaro R."/>
            <person name="Ferrer M."/>
            <person name="Gertler C."/>
            <person name="Goesmann A."/>
            <person name="Golyshina O.V."/>
            <person name="Kaminski F."/>
            <person name="Khachane A.N."/>
            <person name="Lang S."/>
            <person name="Linke B."/>
            <person name="McHardy A.C."/>
            <person name="Meyer F."/>
            <person name="Nechitaylo T."/>
            <person name="Puehler A."/>
            <person name="Regenhardt D."/>
            <person name="Rupp O."/>
            <person name="Sabirova J.S."/>
            <person name="Selbitschka W."/>
            <person name="Yakimov M.M."/>
            <person name="Timmis K.N."/>
            <person name="Vorhoelter F.-J."/>
            <person name="Weidner S."/>
            <person name="Kaiser O."/>
            <person name="Golyshin P.N."/>
        </authorList>
    </citation>
    <scope>NUCLEOTIDE SEQUENCE [LARGE SCALE GENOMIC DNA]</scope>
    <source>
        <strain>ATCC 700651 / DSM 11573 / NCIMB 13689 / SK2</strain>
    </source>
</reference>
<accession>Q0VSI7</accession>
<keyword id="KW-1185">Reference proteome</keyword>
<keyword id="KW-0687">Ribonucleoprotein</keyword>
<keyword id="KW-0689">Ribosomal protein</keyword>
<keyword id="KW-0694">RNA-binding</keyword>
<keyword id="KW-0699">rRNA-binding</keyword>
<name>RL18_ALCBS</name>